<organism>
    <name type="scientific">Desulfosudis oleivorans (strain DSM 6200 / JCM 39069 / Hxd3)</name>
    <name type="common">Desulfococcus oleovorans</name>
    <dbReference type="NCBI Taxonomy" id="96561"/>
    <lineage>
        <taxon>Bacteria</taxon>
        <taxon>Pseudomonadati</taxon>
        <taxon>Thermodesulfobacteriota</taxon>
        <taxon>Desulfobacteria</taxon>
        <taxon>Desulfobacterales</taxon>
        <taxon>Desulfosudaceae</taxon>
        <taxon>Desulfosudis</taxon>
    </lineage>
</organism>
<name>RL17_DESOH</name>
<dbReference type="EMBL" id="CP000859">
    <property type="protein sequence ID" value="ABW66544.1"/>
    <property type="molecule type" value="Genomic_DNA"/>
</dbReference>
<dbReference type="RefSeq" id="WP_012174162.1">
    <property type="nucleotide sequence ID" value="NC_009943.1"/>
</dbReference>
<dbReference type="SMR" id="A8ZV83"/>
<dbReference type="STRING" id="96561.Dole_0734"/>
<dbReference type="KEGG" id="dol:Dole_0734"/>
<dbReference type="eggNOG" id="COG0203">
    <property type="taxonomic scope" value="Bacteria"/>
</dbReference>
<dbReference type="HOGENOM" id="CLU_074407_0_1_7"/>
<dbReference type="OrthoDB" id="9809073at2"/>
<dbReference type="Proteomes" id="UP000008561">
    <property type="component" value="Chromosome"/>
</dbReference>
<dbReference type="GO" id="GO:0022625">
    <property type="term" value="C:cytosolic large ribosomal subunit"/>
    <property type="evidence" value="ECO:0007669"/>
    <property type="project" value="TreeGrafter"/>
</dbReference>
<dbReference type="GO" id="GO:0003735">
    <property type="term" value="F:structural constituent of ribosome"/>
    <property type="evidence" value="ECO:0007669"/>
    <property type="project" value="InterPro"/>
</dbReference>
<dbReference type="GO" id="GO:0006412">
    <property type="term" value="P:translation"/>
    <property type="evidence" value="ECO:0007669"/>
    <property type="project" value="UniProtKB-UniRule"/>
</dbReference>
<dbReference type="FunFam" id="3.90.1030.10:FF:000001">
    <property type="entry name" value="50S ribosomal protein L17"/>
    <property type="match status" value="1"/>
</dbReference>
<dbReference type="Gene3D" id="3.90.1030.10">
    <property type="entry name" value="Ribosomal protein L17"/>
    <property type="match status" value="1"/>
</dbReference>
<dbReference type="HAMAP" id="MF_01368">
    <property type="entry name" value="Ribosomal_bL17"/>
    <property type="match status" value="1"/>
</dbReference>
<dbReference type="InterPro" id="IPR000456">
    <property type="entry name" value="Ribosomal_bL17"/>
</dbReference>
<dbReference type="InterPro" id="IPR047859">
    <property type="entry name" value="Ribosomal_bL17_CS"/>
</dbReference>
<dbReference type="InterPro" id="IPR036373">
    <property type="entry name" value="Ribosomal_bL17_sf"/>
</dbReference>
<dbReference type="NCBIfam" id="TIGR00059">
    <property type="entry name" value="L17"/>
    <property type="match status" value="1"/>
</dbReference>
<dbReference type="PANTHER" id="PTHR14413:SF16">
    <property type="entry name" value="LARGE RIBOSOMAL SUBUNIT PROTEIN BL17M"/>
    <property type="match status" value="1"/>
</dbReference>
<dbReference type="PANTHER" id="PTHR14413">
    <property type="entry name" value="RIBOSOMAL PROTEIN L17"/>
    <property type="match status" value="1"/>
</dbReference>
<dbReference type="Pfam" id="PF01196">
    <property type="entry name" value="Ribosomal_L17"/>
    <property type="match status" value="1"/>
</dbReference>
<dbReference type="SUPFAM" id="SSF64263">
    <property type="entry name" value="Prokaryotic ribosomal protein L17"/>
    <property type="match status" value="1"/>
</dbReference>
<dbReference type="PROSITE" id="PS01167">
    <property type="entry name" value="RIBOSOMAL_L17"/>
    <property type="match status" value="1"/>
</dbReference>
<evidence type="ECO:0000255" key="1">
    <source>
        <dbReference type="HAMAP-Rule" id="MF_01368"/>
    </source>
</evidence>
<evidence type="ECO:0000256" key="2">
    <source>
        <dbReference type="SAM" id="MobiDB-lite"/>
    </source>
</evidence>
<evidence type="ECO:0000305" key="3"/>
<protein>
    <recommendedName>
        <fullName evidence="1">Large ribosomal subunit protein bL17</fullName>
    </recommendedName>
    <alternativeName>
        <fullName evidence="3">50S ribosomal protein L17</fullName>
    </alternativeName>
</protein>
<comment type="subunit">
    <text evidence="1">Part of the 50S ribosomal subunit. Contacts protein L32.</text>
</comment>
<comment type="similarity">
    <text evidence="1">Belongs to the bacterial ribosomal protein bL17 family.</text>
</comment>
<proteinExistence type="inferred from homology"/>
<accession>A8ZV83</accession>
<feature type="chain" id="PRO_1000144412" description="Large ribosomal subunit protein bL17">
    <location>
        <begin position="1"/>
        <end position="208"/>
    </location>
</feature>
<feature type="region of interest" description="Disordered" evidence="2">
    <location>
        <begin position="122"/>
        <end position="208"/>
    </location>
</feature>
<feature type="compositionally biased region" description="Low complexity" evidence="2">
    <location>
        <begin position="151"/>
        <end position="179"/>
    </location>
</feature>
<sequence>MRHRKSGVKLGRTGSHRNAMFRNMVTSLLKHEKIQTTDAKAKELRRWADHVITLAKRGDLHARRQVMAIVREKNVVHKLFAEAAERFGSREGGYTRLTKIGARPGDAAPVTLIELVSLTETTEKKKKKPAKTAAKPAPTPSAPAVEKEAAADTPAPAAEESAPAKAAEPEAEAAAPEAEAAPEEPEVPAADTPVEDDGASEEAPPKTE</sequence>
<keyword id="KW-1185">Reference proteome</keyword>
<keyword id="KW-0687">Ribonucleoprotein</keyword>
<keyword id="KW-0689">Ribosomal protein</keyword>
<reference key="1">
    <citation type="submission" date="2007-10" db="EMBL/GenBank/DDBJ databases">
        <title>Complete sequence of Desulfococcus oleovorans Hxd3.</title>
        <authorList>
            <consortium name="US DOE Joint Genome Institute"/>
            <person name="Copeland A."/>
            <person name="Lucas S."/>
            <person name="Lapidus A."/>
            <person name="Barry K."/>
            <person name="Glavina del Rio T."/>
            <person name="Dalin E."/>
            <person name="Tice H."/>
            <person name="Pitluck S."/>
            <person name="Kiss H."/>
            <person name="Brettin T."/>
            <person name="Bruce D."/>
            <person name="Detter J.C."/>
            <person name="Han C."/>
            <person name="Schmutz J."/>
            <person name="Larimer F."/>
            <person name="Land M."/>
            <person name="Hauser L."/>
            <person name="Kyrpides N."/>
            <person name="Kim E."/>
            <person name="Wawrik B."/>
            <person name="Richardson P."/>
        </authorList>
    </citation>
    <scope>NUCLEOTIDE SEQUENCE [LARGE SCALE GENOMIC DNA]</scope>
    <source>
        <strain>DSM 6200 / JCM 39069 / Hxd3</strain>
    </source>
</reference>
<gene>
    <name evidence="1" type="primary">rplQ</name>
    <name type="ordered locus">Dole_0734</name>
</gene>